<sequence>MASSAHSDSASSDAPAELPAEILAAAPWSAPADDSEHLRITAVRTFLTAPQGCPYVIVRVETNQPGLYGLGCASDPQRTLAIRSVVDDYYAPMLLGRDPADIEDLHRLLFNSGYWRGGSIGQNALAGVDVALWDIKGKVAGLPLHQLLGGRAREAAEAYTHVDGDNAGEIAEKVLAAHERGYRHVRVQVSVPGTDTYGTAPRDAAEARRRELRAGSWDSLAYLRHVPPVLREIRERVGTGVELLHDAHERLTPSQARELVHEVEDARLFFLEDALAPEDAAHFDQLRAAGSVPLAVGELYHDVMMYLPLLQRQVIDFARIRVPTLGGLTPTRKLVAAVELFGARTAPHGPGDVSPVGMAANLGLDLSSPAFGVQEAATFREPTREVFPGTPVPERGRFHGSDRPGLGVDFDEVAARKYPVPEPLRHDRWALLRNGDGSVQRP</sequence>
<proteinExistence type="inferred from homology"/>
<evidence type="ECO:0000250" key="1"/>
<evidence type="ECO:0000269" key="2">
    <source>
    </source>
</evidence>
<evidence type="ECO:0000305" key="3"/>
<dbReference type="EMBL" id="GG770539">
    <property type="protein sequence ID" value="EDY44092.2"/>
    <property type="molecule type" value="Genomic_DNA"/>
</dbReference>
<dbReference type="RefSeq" id="WP_008747808.1">
    <property type="nucleotide sequence ID" value="NZ_GG770539.1"/>
</dbReference>
<dbReference type="SMR" id="B5GCP6"/>
<dbReference type="OrthoDB" id="5241672at2"/>
<dbReference type="Proteomes" id="UP000002779">
    <property type="component" value="Unassembled WGS sequence"/>
</dbReference>
<dbReference type="GO" id="GO:0000287">
    <property type="term" value="F:magnesium ion binding"/>
    <property type="evidence" value="ECO:0000250"/>
    <property type="project" value="UniProtKB"/>
</dbReference>
<dbReference type="GO" id="GO:0009063">
    <property type="term" value="P:amino acid catabolic process"/>
    <property type="evidence" value="ECO:0007669"/>
    <property type="project" value="InterPro"/>
</dbReference>
<dbReference type="FunFam" id="3.20.20.120:FF:000005">
    <property type="entry name" value="Putative L-rhamnonate dehydratase"/>
    <property type="match status" value="1"/>
</dbReference>
<dbReference type="Gene3D" id="3.20.20.120">
    <property type="entry name" value="Enolase-like C-terminal domain"/>
    <property type="match status" value="1"/>
</dbReference>
<dbReference type="Gene3D" id="3.30.390.10">
    <property type="entry name" value="Enolase-like, N-terminal domain"/>
    <property type="match status" value="1"/>
</dbReference>
<dbReference type="InterPro" id="IPR034593">
    <property type="entry name" value="DgoD-like"/>
</dbReference>
<dbReference type="InterPro" id="IPR036849">
    <property type="entry name" value="Enolase-like_C_sf"/>
</dbReference>
<dbReference type="InterPro" id="IPR029017">
    <property type="entry name" value="Enolase-like_N"/>
</dbReference>
<dbReference type="InterPro" id="IPR029065">
    <property type="entry name" value="Enolase_C-like"/>
</dbReference>
<dbReference type="InterPro" id="IPR018110">
    <property type="entry name" value="Mandel_Rmase/mucon_lact_enz_CS"/>
</dbReference>
<dbReference type="InterPro" id="IPR013342">
    <property type="entry name" value="Mandelate_racemase_C"/>
</dbReference>
<dbReference type="InterPro" id="IPR013341">
    <property type="entry name" value="Mandelate_racemase_N_dom"/>
</dbReference>
<dbReference type="PANTHER" id="PTHR48080">
    <property type="entry name" value="D-GALACTONATE DEHYDRATASE-RELATED"/>
    <property type="match status" value="1"/>
</dbReference>
<dbReference type="PANTHER" id="PTHR48080:SF6">
    <property type="entry name" value="STARVATION-SENSING PROTEIN RSPA"/>
    <property type="match status" value="1"/>
</dbReference>
<dbReference type="Pfam" id="PF13378">
    <property type="entry name" value="MR_MLE_C"/>
    <property type="match status" value="1"/>
</dbReference>
<dbReference type="Pfam" id="PF02746">
    <property type="entry name" value="MR_MLE_N"/>
    <property type="match status" value="1"/>
</dbReference>
<dbReference type="SFLD" id="SFLDS00001">
    <property type="entry name" value="Enolase"/>
    <property type="match status" value="1"/>
</dbReference>
<dbReference type="SMART" id="SM00922">
    <property type="entry name" value="MR_MLE"/>
    <property type="match status" value="1"/>
</dbReference>
<dbReference type="SUPFAM" id="SSF51604">
    <property type="entry name" value="Enolase C-terminal domain-like"/>
    <property type="match status" value="1"/>
</dbReference>
<dbReference type="SUPFAM" id="SSF54826">
    <property type="entry name" value="Enolase N-terminal domain-like"/>
    <property type="match status" value="1"/>
</dbReference>
<dbReference type="PROSITE" id="PS00908">
    <property type="entry name" value="MR_MLE_1"/>
    <property type="match status" value="1"/>
</dbReference>
<organism>
    <name type="scientific">Streptomyces sp. (strain SPB074)</name>
    <dbReference type="NCBI Taxonomy" id="465543"/>
    <lineage>
        <taxon>Bacteria</taxon>
        <taxon>Bacillati</taxon>
        <taxon>Actinomycetota</taxon>
        <taxon>Actinomycetes</taxon>
        <taxon>Kitasatosporales</taxon>
        <taxon>Streptomycetaceae</taxon>
        <taxon>Streptomyces</taxon>
    </lineage>
</organism>
<accession>B5GCP6</accession>
<reference key="1">
    <citation type="submission" date="2009-10" db="EMBL/GenBank/DDBJ databases">
        <title>The genome sequence of Streptomyces sp. strain SPB74.</title>
        <authorList>
            <consortium name="The Broad Institute Genome Sequencing Platform, Broad Institute Microbial Sequencing Center"/>
            <person name="Fischbach M."/>
            <person name="Godfrey P."/>
            <person name="Ward D."/>
            <person name="Young S."/>
            <person name="Zeng Q."/>
            <person name="Koehrsen M."/>
            <person name="Alvarado L."/>
            <person name="Berlin A.M."/>
            <person name="Bochicchio J."/>
            <person name="Borenstein D."/>
            <person name="Chapman S.B."/>
            <person name="Chen Z."/>
            <person name="Engels R."/>
            <person name="Freedman E."/>
            <person name="Gellesch M."/>
            <person name="Goldberg J."/>
            <person name="Griggs A."/>
            <person name="Gujja S."/>
            <person name="Heilman E.R."/>
            <person name="Heiman D.I."/>
            <person name="Hepburn T.A."/>
            <person name="Howarth C."/>
            <person name="Jen D."/>
            <person name="Larson L."/>
            <person name="Lewis B."/>
            <person name="Mehta T."/>
            <person name="Park D."/>
            <person name="Pearson M."/>
            <person name="Richards J."/>
            <person name="Roberts A."/>
            <person name="Saif S."/>
            <person name="Shea T.D."/>
            <person name="Shenoy N."/>
            <person name="Sisk P."/>
            <person name="Stolte C."/>
            <person name="Sykes S.N."/>
            <person name="Thomson T."/>
            <person name="Walk T."/>
            <person name="White J."/>
            <person name="Yandava C."/>
            <person name="Straight P."/>
            <person name="Clardy J."/>
            <person name="Hung D."/>
            <person name="Kolter R."/>
            <person name="Mekalanos J."/>
            <person name="Walker S."/>
            <person name="Walsh C.T."/>
            <person name="Wieland-Brown L.C."/>
            <person name="Haas B."/>
            <person name="Nusbaum C."/>
            <person name="Birren B."/>
        </authorList>
    </citation>
    <scope>NUCLEOTIDE SEQUENCE [LARGE SCALE GENOMIC DNA]</scope>
    <source>
        <strain>SPB074</strain>
    </source>
</reference>
<reference key="2">
    <citation type="journal article" date="2014" name="Biochemistry">
        <title>Discovery of function in the enolase superfamily: D-mannonate and D-gluconate dehydratases in the D-mannonate dehydratase subgroup.</title>
        <authorList>
            <person name="Wichelecki D.J."/>
            <person name="Balthazor B.M."/>
            <person name="Chau A.C."/>
            <person name="Vetting M.W."/>
            <person name="Fedorov A.A."/>
            <person name="Fedorov E.V."/>
            <person name="Lukk T."/>
            <person name="Patskovsky Y.V."/>
            <person name="Stead M.B."/>
            <person name="Hillerich B.S."/>
            <person name="Seidel R.D."/>
            <person name="Almo S.C."/>
            <person name="Gerlt J.A."/>
        </authorList>
    </citation>
    <scope>FUNCTION</scope>
    <scope>LACK OF D-MANNONATE DEHYDRATASE ACTIVITY</scope>
    <source>
        <strain>SPB074</strain>
    </source>
</reference>
<keyword id="KW-0460">Magnesium</keyword>
<keyword id="KW-0479">Metal-binding</keyword>
<protein>
    <recommendedName>
        <fullName>D-galactonate dehydratase family member SSBG_02010</fullName>
    </recommendedName>
</protein>
<gene>
    <name type="ORF">SSBG_02010</name>
</gene>
<name>IMAND_STRSH</name>
<feature type="chain" id="PRO_0000429914" description="D-galactonate dehydratase family member SSBG_02010">
    <location>
        <begin position="1"/>
        <end position="442"/>
    </location>
</feature>
<feature type="binding site" evidence="1">
    <location>
        <position position="246"/>
    </location>
    <ligand>
        <name>Mg(2+)</name>
        <dbReference type="ChEBI" id="CHEBI:18420"/>
    </ligand>
</feature>
<feature type="binding site" evidence="1">
    <location>
        <position position="248"/>
    </location>
    <ligand>
        <name>D-arabinonate</name>
        <dbReference type="ChEBI" id="CHEBI:16157"/>
    </ligand>
</feature>
<feature type="binding site" evidence="1">
    <location>
        <position position="272"/>
    </location>
    <ligand>
        <name>Mg(2+)</name>
        <dbReference type="ChEBI" id="CHEBI:18420"/>
    </ligand>
</feature>
<feature type="binding site" evidence="1">
    <location>
        <position position="298"/>
    </location>
    <ligand>
        <name>D-arabinonate</name>
        <dbReference type="ChEBI" id="CHEBI:16157"/>
    </ligand>
</feature>
<feature type="binding site" evidence="1">
    <location>
        <position position="298"/>
    </location>
    <ligand>
        <name>Mg(2+)</name>
        <dbReference type="ChEBI" id="CHEBI:18420"/>
    </ligand>
</feature>
<feature type="binding site" evidence="1">
    <location>
        <position position="319"/>
    </location>
    <ligand>
        <name>D-arabinonate</name>
        <dbReference type="ChEBI" id="CHEBI:16157"/>
    </ligand>
</feature>
<feature type="binding site" evidence="1">
    <location>
        <position position="348"/>
    </location>
    <ligand>
        <name>D-arabinonate</name>
        <dbReference type="ChEBI" id="CHEBI:16157"/>
    </ligand>
</feature>
<feature type="binding site" evidence="1">
    <location>
        <position position="375"/>
    </location>
    <ligand>
        <name>D-arabinonate</name>
        <dbReference type="ChEBI" id="CHEBI:16157"/>
    </ligand>
</feature>
<comment type="function">
    <text evidence="2">Has no detectable activity with D-mannonate and with a panel of 70 other acid sugars (in vitro), in spite of the conservation of the residues that are expected to be important for catalytic activity and cofactor binding. May have evolved a divergent function.</text>
</comment>
<comment type="similarity">
    <text evidence="3">Belongs to the mandelate racemase/muconate lactonizing enzyme family. GalD subfamily.</text>
</comment>